<proteinExistence type="inferred from homology"/>
<protein>
    <recommendedName>
        <fullName>Aspartyl/glutamyl-tRNA(Asn/Gln) amidotransferase subunit B</fullName>
        <shortName>Asp/Glu-ADT subunit B</shortName>
        <ecNumber>6.3.5.-</ecNumber>
    </recommendedName>
</protein>
<evidence type="ECO:0000250" key="1"/>
<evidence type="ECO:0000305" key="2"/>
<comment type="function">
    <text evidence="1">Allows the formation of correctly charged Asn-tRNA(Asn) or Gln-tRNA(Gln) through the transamidation of misacylated Asp-tRNA(Asn) or Glu-tRNA(Gln) in organisms which lack either or both of asparaginyl-tRNA or glutaminyl-tRNA synthetases. The reaction takes place in the presence of glutamine and ATP through an activated phospho-Asp-tRNA(Asn) or phospho-Glu-tRNA(Gln) (By similarity).</text>
</comment>
<comment type="catalytic activity">
    <reaction>
        <text>L-glutamyl-tRNA(Gln) + L-glutamine + ATP + H2O = L-glutaminyl-tRNA(Gln) + L-glutamate + ADP + phosphate + H(+)</text>
        <dbReference type="Rhea" id="RHEA:17521"/>
        <dbReference type="Rhea" id="RHEA-COMP:9681"/>
        <dbReference type="Rhea" id="RHEA-COMP:9684"/>
        <dbReference type="ChEBI" id="CHEBI:15377"/>
        <dbReference type="ChEBI" id="CHEBI:15378"/>
        <dbReference type="ChEBI" id="CHEBI:29985"/>
        <dbReference type="ChEBI" id="CHEBI:30616"/>
        <dbReference type="ChEBI" id="CHEBI:43474"/>
        <dbReference type="ChEBI" id="CHEBI:58359"/>
        <dbReference type="ChEBI" id="CHEBI:78520"/>
        <dbReference type="ChEBI" id="CHEBI:78521"/>
        <dbReference type="ChEBI" id="CHEBI:456216"/>
    </reaction>
</comment>
<comment type="catalytic activity">
    <reaction>
        <text>L-aspartyl-tRNA(Asn) + L-glutamine + ATP + H2O = L-asparaginyl-tRNA(Asn) + L-glutamate + ADP + phosphate + 2 H(+)</text>
        <dbReference type="Rhea" id="RHEA:14513"/>
        <dbReference type="Rhea" id="RHEA-COMP:9674"/>
        <dbReference type="Rhea" id="RHEA-COMP:9677"/>
        <dbReference type="ChEBI" id="CHEBI:15377"/>
        <dbReference type="ChEBI" id="CHEBI:15378"/>
        <dbReference type="ChEBI" id="CHEBI:29985"/>
        <dbReference type="ChEBI" id="CHEBI:30616"/>
        <dbReference type="ChEBI" id="CHEBI:43474"/>
        <dbReference type="ChEBI" id="CHEBI:58359"/>
        <dbReference type="ChEBI" id="CHEBI:78515"/>
        <dbReference type="ChEBI" id="CHEBI:78516"/>
        <dbReference type="ChEBI" id="CHEBI:456216"/>
    </reaction>
</comment>
<comment type="subunit">
    <text evidence="1">Heterotrimer of A, B and C subunits.</text>
</comment>
<comment type="similarity">
    <text evidence="2">Belongs to the GatB/GatE family. GatB subfamily.</text>
</comment>
<dbReference type="EC" id="6.3.5.-"/>
<dbReference type="EMBL" id="AJ235270">
    <property type="protein sequence ID" value="CAA14619.1"/>
    <property type="molecule type" value="Genomic_DNA"/>
</dbReference>
<dbReference type="PIR" id="D71725">
    <property type="entry name" value="D71725"/>
</dbReference>
<dbReference type="RefSeq" id="NP_220542.1">
    <property type="nucleotide sequence ID" value="NC_000963.1"/>
</dbReference>
<dbReference type="RefSeq" id="WP_004597215.1">
    <property type="nucleotide sequence ID" value="NC_000963.1"/>
</dbReference>
<dbReference type="SMR" id="Q9ZE11"/>
<dbReference type="STRING" id="272947.gene:17555234"/>
<dbReference type="EnsemblBacteria" id="CAA14619">
    <property type="protein sequence ID" value="CAA14619"/>
    <property type="gene ID" value="CAA14619"/>
</dbReference>
<dbReference type="GeneID" id="57569280"/>
<dbReference type="KEGG" id="rpr:RP151"/>
<dbReference type="PATRIC" id="fig|272947.5.peg.156"/>
<dbReference type="eggNOG" id="COG0064">
    <property type="taxonomic scope" value="Bacteria"/>
</dbReference>
<dbReference type="HOGENOM" id="CLU_019240_0_0_5"/>
<dbReference type="OrthoDB" id="9804078at2"/>
<dbReference type="Proteomes" id="UP000002480">
    <property type="component" value="Chromosome"/>
</dbReference>
<dbReference type="GO" id="GO:0030956">
    <property type="term" value="C:glutamyl-tRNA(Gln) amidotransferase complex"/>
    <property type="evidence" value="ECO:0007669"/>
    <property type="project" value="TreeGrafter"/>
</dbReference>
<dbReference type="GO" id="GO:0050566">
    <property type="term" value="F:asparaginyl-tRNA synthase (glutamine-hydrolyzing) activity"/>
    <property type="evidence" value="ECO:0007669"/>
    <property type="project" value="RHEA"/>
</dbReference>
<dbReference type="GO" id="GO:0005524">
    <property type="term" value="F:ATP binding"/>
    <property type="evidence" value="ECO:0007669"/>
    <property type="project" value="UniProtKB-KW"/>
</dbReference>
<dbReference type="GO" id="GO:0050567">
    <property type="term" value="F:glutaminyl-tRNA synthase (glutamine-hydrolyzing) activity"/>
    <property type="evidence" value="ECO:0007669"/>
    <property type="project" value="UniProtKB-UniRule"/>
</dbReference>
<dbReference type="GO" id="GO:0070681">
    <property type="term" value="P:glutaminyl-tRNAGln biosynthesis via transamidation"/>
    <property type="evidence" value="ECO:0007669"/>
    <property type="project" value="TreeGrafter"/>
</dbReference>
<dbReference type="GO" id="GO:0006412">
    <property type="term" value="P:translation"/>
    <property type="evidence" value="ECO:0007669"/>
    <property type="project" value="UniProtKB-UniRule"/>
</dbReference>
<dbReference type="FunFam" id="1.10.10.410:FF:000001">
    <property type="entry name" value="Aspartyl/glutamyl-tRNA(Asn/Gln) amidotransferase subunit B"/>
    <property type="match status" value="1"/>
</dbReference>
<dbReference type="Gene3D" id="1.10.10.410">
    <property type="match status" value="1"/>
</dbReference>
<dbReference type="Gene3D" id="1.10.150.380">
    <property type="entry name" value="GatB domain, N-terminal subdomain"/>
    <property type="match status" value="1"/>
</dbReference>
<dbReference type="HAMAP" id="MF_00121">
    <property type="entry name" value="GatB"/>
    <property type="match status" value="1"/>
</dbReference>
<dbReference type="InterPro" id="IPR017959">
    <property type="entry name" value="Asn/Gln-tRNA_amidoTrfase_suB/E"/>
</dbReference>
<dbReference type="InterPro" id="IPR006075">
    <property type="entry name" value="Asn/Gln-tRNA_Trfase_suB/E_cat"/>
</dbReference>
<dbReference type="InterPro" id="IPR018027">
    <property type="entry name" value="Asn/Gln_amidotransferase"/>
</dbReference>
<dbReference type="InterPro" id="IPR003789">
    <property type="entry name" value="Asn/Gln_tRNA_amidoTrase-B-like"/>
</dbReference>
<dbReference type="InterPro" id="IPR004413">
    <property type="entry name" value="GatB"/>
</dbReference>
<dbReference type="InterPro" id="IPR042114">
    <property type="entry name" value="GatB_C_1"/>
</dbReference>
<dbReference type="InterPro" id="IPR023168">
    <property type="entry name" value="GatB_Yqey_C_2"/>
</dbReference>
<dbReference type="InterPro" id="IPR017958">
    <property type="entry name" value="Gln-tRNA_amidoTrfase_suB_CS"/>
</dbReference>
<dbReference type="InterPro" id="IPR014746">
    <property type="entry name" value="Gln_synth/guanido_kin_cat_dom"/>
</dbReference>
<dbReference type="NCBIfam" id="TIGR00133">
    <property type="entry name" value="gatB"/>
    <property type="match status" value="1"/>
</dbReference>
<dbReference type="NCBIfam" id="NF004012">
    <property type="entry name" value="PRK05477.1-2"/>
    <property type="match status" value="1"/>
</dbReference>
<dbReference type="NCBIfam" id="NF004014">
    <property type="entry name" value="PRK05477.1-4"/>
    <property type="match status" value="1"/>
</dbReference>
<dbReference type="NCBIfam" id="NF004015">
    <property type="entry name" value="PRK05477.1-5"/>
    <property type="match status" value="1"/>
</dbReference>
<dbReference type="PANTHER" id="PTHR11659">
    <property type="entry name" value="GLUTAMYL-TRNA GLN AMIDOTRANSFERASE SUBUNIT B MITOCHONDRIAL AND PROKARYOTIC PET112-RELATED"/>
    <property type="match status" value="1"/>
</dbReference>
<dbReference type="PANTHER" id="PTHR11659:SF0">
    <property type="entry name" value="GLUTAMYL-TRNA(GLN) AMIDOTRANSFERASE SUBUNIT B, MITOCHONDRIAL"/>
    <property type="match status" value="1"/>
</dbReference>
<dbReference type="Pfam" id="PF02934">
    <property type="entry name" value="GatB_N"/>
    <property type="match status" value="1"/>
</dbReference>
<dbReference type="Pfam" id="PF02637">
    <property type="entry name" value="GatB_Yqey"/>
    <property type="match status" value="1"/>
</dbReference>
<dbReference type="SMART" id="SM00845">
    <property type="entry name" value="GatB_Yqey"/>
    <property type="match status" value="1"/>
</dbReference>
<dbReference type="SUPFAM" id="SSF89095">
    <property type="entry name" value="GatB/YqeY motif"/>
    <property type="match status" value="1"/>
</dbReference>
<dbReference type="SUPFAM" id="SSF55931">
    <property type="entry name" value="Glutamine synthetase/guanido kinase"/>
    <property type="match status" value="1"/>
</dbReference>
<dbReference type="PROSITE" id="PS01234">
    <property type="entry name" value="GATB"/>
    <property type="match status" value="1"/>
</dbReference>
<feature type="chain" id="PRO_0000148832" description="Aspartyl/glutamyl-tRNA(Asn/Gln) amidotransferase subunit B">
    <location>
        <begin position="1"/>
        <end position="483"/>
    </location>
</feature>
<sequence>MEYIEGNTGKWEYVIGLEIHAQISSKSKLFSGSSTLFAASPNSQVSYVDAAMPGMLPVLNKHCVYQAIKTGLVLKAKINKYSVFDRKNYFYADLPQGYQISQFYYPIVQDGMIEIPTSTGDLKTIRINRLHLEQDAGKSIHDQSPYYSLIDLNRAGIGLMEIVTEPDISSPEEAAEFVKKLRNLLRYIGSCDGDMEKGSMRCDANISVRRIGEALGTRCEIKNINSIRNIIKAIEFEAKRQVDLLESGETIIQETRLFNVDSCETKTMRLKEEALDYRYFPDPDLLPLIIPDELINELKASLPELPDQKIEKYIKKFGLSQYDAGIIVSDEAVAEYFEKAANECNPKMLTNWLITELFGQLNKASIGIRECKITPSDFAKLIKLIEHDTISGKIAKTVFEIMFETGKAPDKIVEEKRLVQISDNKILNTVIDEVIAENSKSVKCYKSGKDKLFGFFVGQVMKKTECKANPTLVNKLLKDKLDS</sequence>
<name>GATB_RICPR</name>
<gene>
    <name type="primary">gatB</name>
    <name type="ordered locus">RP151</name>
</gene>
<keyword id="KW-0067">ATP-binding</keyword>
<keyword id="KW-0436">Ligase</keyword>
<keyword id="KW-0547">Nucleotide-binding</keyword>
<keyword id="KW-0648">Protein biosynthesis</keyword>
<keyword id="KW-1185">Reference proteome</keyword>
<reference key="1">
    <citation type="journal article" date="1998" name="Nature">
        <title>The genome sequence of Rickettsia prowazekii and the origin of mitochondria.</title>
        <authorList>
            <person name="Andersson S.G.E."/>
            <person name="Zomorodipour A."/>
            <person name="Andersson J.O."/>
            <person name="Sicheritz-Ponten T."/>
            <person name="Alsmark U.C.M."/>
            <person name="Podowski R.M."/>
            <person name="Naeslund A.K."/>
            <person name="Eriksson A.-S."/>
            <person name="Winkler H.H."/>
            <person name="Kurland C.G."/>
        </authorList>
    </citation>
    <scope>NUCLEOTIDE SEQUENCE [LARGE SCALE GENOMIC DNA]</scope>
    <source>
        <strain>Madrid E</strain>
    </source>
</reference>
<accession>Q9ZE11</accession>
<organism>
    <name type="scientific">Rickettsia prowazekii (strain Madrid E)</name>
    <dbReference type="NCBI Taxonomy" id="272947"/>
    <lineage>
        <taxon>Bacteria</taxon>
        <taxon>Pseudomonadati</taxon>
        <taxon>Pseudomonadota</taxon>
        <taxon>Alphaproteobacteria</taxon>
        <taxon>Rickettsiales</taxon>
        <taxon>Rickettsiaceae</taxon>
        <taxon>Rickettsieae</taxon>
        <taxon>Rickettsia</taxon>
        <taxon>typhus group</taxon>
    </lineage>
</organism>